<accession>Q5NBU5</accession>
<protein>
    <recommendedName>
        <fullName>F-box only protein 39</fullName>
    </recommendedName>
</protein>
<keyword id="KW-1185">Reference proteome</keyword>
<keyword id="KW-0833">Ubl conjugation pathway</keyword>
<reference key="1">
    <citation type="journal article" date="2009" name="PLoS Biol.">
        <title>Lineage-specific biology revealed by a finished genome assembly of the mouse.</title>
        <authorList>
            <person name="Church D.M."/>
            <person name="Goodstadt L."/>
            <person name="Hillier L.W."/>
            <person name="Zody M.C."/>
            <person name="Goldstein S."/>
            <person name="She X."/>
            <person name="Bult C.J."/>
            <person name="Agarwala R."/>
            <person name="Cherry J.L."/>
            <person name="DiCuccio M."/>
            <person name="Hlavina W."/>
            <person name="Kapustin Y."/>
            <person name="Meric P."/>
            <person name="Maglott D."/>
            <person name="Birtle Z."/>
            <person name="Marques A.C."/>
            <person name="Graves T."/>
            <person name="Zhou S."/>
            <person name="Teague B."/>
            <person name="Potamousis K."/>
            <person name="Churas C."/>
            <person name="Place M."/>
            <person name="Herschleb J."/>
            <person name="Runnheim R."/>
            <person name="Forrest D."/>
            <person name="Amos-Landgraf J."/>
            <person name="Schwartz D.C."/>
            <person name="Cheng Z."/>
            <person name="Lindblad-Toh K."/>
            <person name="Eichler E.E."/>
            <person name="Ponting C.P."/>
        </authorList>
    </citation>
    <scope>NUCLEOTIDE SEQUENCE [LARGE SCALE GENOMIC DNA]</scope>
    <source>
        <strain>C57BL/6J</strain>
    </source>
</reference>
<feature type="chain" id="PRO_0000119936" description="F-box only protein 39">
    <location>
        <begin position="1"/>
        <end position="443"/>
    </location>
</feature>
<feature type="domain" description="F-box" evidence="2">
    <location>
        <begin position="13"/>
        <end position="59"/>
    </location>
</feature>
<organism>
    <name type="scientific">Mus musculus</name>
    <name type="common">Mouse</name>
    <dbReference type="NCBI Taxonomy" id="10090"/>
    <lineage>
        <taxon>Eukaryota</taxon>
        <taxon>Metazoa</taxon>
        <taxon>Chordata</taxon>
        <taxon>Craniata</taxon>
        <taxon>Vertebrata</taxon>
        <taxon>Euteleostomi</taxon>
        <taxon>Mammalia</taxon>
        <taxon>Eutheria</taxon>
        <taxon>Euarchontoglires</taxon>
        <taxon>Glires</taxon>
        <taxon>Rodentia</taxon>
        <taxon>Myomorpha</taxon>
        <taxon>Muroidea</taxon>
        <taxon>Muridae</taxon>
        <taxon>Murinae</taxon>
        <taxon>Mus</taxon>
        <taxon>Mus</taxon>
    </lineage>
</organism>
<proteinExistence type="inferred from homology"/>
<gene>
    <name type="primary">Fbxo39</name>
</gene>
<name>FBX39_MOUSE</name>
<sequence>MDEDCEVTQLQEQSCWATLPDVCLRRVFWWLGDRDRSRAALVCRKWNQIMYSADLWRYRTITFSGRPSRVHASEFESALWYIKKFGRYLEHLEIKFLNPYNAVLTKKFQVTMRGLLSCLGKSNNRLRSLSIQHLELDRLVWRNSIRGSLIKSLSFFLKKMGKHLDHLSLKGARLTVEQGCHILNSLSYMQNENMASELNIEDFFSHHLAVYGSSQFNKAMATFRNLTFLTLNYNCISDELLETLSENNAGTLRTMNIKCHVHDPHGQVVWGMSWAKLARQASNLKVNFFFERVMKYERLARILLQEIPVRSISLRSCYFSDPDWSMRPTLTDLLPTFRNTLQKLTFEFNNNHESLDEQLHLLILACRKLFYFKIWAFLDVKFVERILKSQEEGQCSLHTLKVRIYTNRYETNEEDRTLREIYRKYRKLIDSELNYFVVAYPMM</sequence>
<comment type="function">
    <text evidence="1">Substrate-recognition component of the SCF (SKP1-CUL1-F-box protein)-type E3 ubiquitin ligase complex.</text>
</comment>
<comment type="subunit">
    <text evidence="1">Directly interacts with SKP1 and CUL1.</text>
</comment>
<evidence type="ECO:0000250" key="1"/>
<evidence type="ECO:0000255" key="2">
    <source>
        <dbReference type="PROSITE-ProRule" id="PRU00080"/>
    </source>
</evidence>
<dbReference type="EMBL" id="AL929071">
    <property type="status" value="NOT_ANNOTATED_CDS"/>
    <property type="molecule type" value="Genomic_DNA"/>
</dbReference>
<dbReference type="CCDS" id="CCDS36214.1"/>
<dbReference type="RefSeq" id="NP_001093158.1">
    <property type="nucleotide sequence ID" value="NM_001099688.2"/>
</dbReference>
<dbReference type="RefSeq" id="XP_006533965.2">
    <property type="nucleotide sequence ID" value="XM_006533902.3"/>
</dbReference>
<dbReference type="BioGRID" id="554040">
    <property type="interactions" value="1"/>
</dbReference>
<dbReference type="FunCoup" id="Q5NBU5">
    <property type="interactions" value="30"/>
</dbReference>
<dbReference type="STRING" id="10090.ENSMUSP00000104144"/>
<dbReference type="iPTMnet" id="Q5NBU5"/>
<dbReference type="PhosphoSitePlus" id="Q5NBU5"/>
<dbReference type="PaxDb" id="10090-ENSMUSP00000104144"/>
<dbReference type="ProteomicsDB" id="271884"/>
<dbReference type="Antibodypedia" id="53192">
    <property type="antibodies" value="91 antibodies from 14 providers"/>
</dbReference>
<dbReference type="Ensembl" id="ENSMUST00000108504.2">
    <property type="protein sequence ID" value="ENSMUSP00000104144.2"/>
    <property type="gene ID" value="ENSMUSG00000070388.4"/>
</dbReference>
<dbReference type="GeneID" id="628100"/>
<dbReference type="KEGG" id="mmu:628100"/>
<dbReference type="UCSC" id="uc007jys.2">
    <property type="organism name" value="mouse"/>
</dbReference>
<dbReference type="AGR" id="MGI:3505735"/>
<dbReference type="CTD" id="162517"/>
<dbReference type="MGI" id="MGI:3505735">
    <property type="gene designation" value="Fbxo39"/>
</dbReference>
<dbReference type="VEuPathDB" id="HostDB:ENSMUSG00000070388"/>
<dbReference type="eggNOG" id="KOG1947">
    <property type="taxonomic scope" value="Eukaryota"/>
</dbReference>
<dbReference type="GeneTree" id="ENSGT00510000048837"/>
<dbReference type="HOGENOM" id="CLU_050223_0_0_1"/>
<dbReference type="InParanoid" id="Q5NBU5"/>
<dbReference type="OMA" id="MATFHNL"/>
<dbReference type="OrthoDB" id="61560at2759"/>
<dbReference type="PhylomeDB" id="Q5NBU5"/>
<dbReference type="TreeFam" id="TF321665"/>
<dbReference type="BioGRID-ORCS" id="628100">
    <property type="hits" value="2 hits in 78 CRISPR screens"/>
</dbReference>
<dbReference type="PRO" id="PR:Q5NBU5"/>
<dbReference type="Proteomes" id="UP000000589">
    <property type="component" value="Chromosome 11"/>
</dbReference>
<dbReference type="RNAct" id="Q5NBU5">
    <property type="molecule type" value="protein"/>
</dbReference>
<dbReference type="Bgee" id="ENSMUSG00000070388">
    <property type="expression patterns" value="Expressed in testis and 3 other cell types or tissues"/>
</dbReference>
<dbReference type="CDD" id="cd22108">
    <property type="entry name" value="F-box_FBXO39"/>
    <property type="match status" value="1"/>
</dbReference>
<dbReference type="FunFam" id="1.20.1280.50:FF:000027">
    <property type="entry name" value="F-box only protein 39"/>
    <property type="match status" value="1"/>
</dbReference>
<dbReference type="FunFam" id="3.80.10.10:FF:000237">
    <property type="entry name" value="F-box only protein 39"/>
    <property type="match status" value="1"/>
</dbReference>
<dbReference type="Gene3D" id="1.20.1280.50">
    <property type="match status" value="1"/>
</dbReference>
<dbReference type="Gene3D" id="3.80.10.10">
    <property type="entry name" value="Ribonuclease Inhibitor"/>
    <property type="match status" value="1"/>
</dbReference>
<dbReference type="InterPro" id="IPR036047">
    <property type="entry name" value="F-box-like_dom_sf"/>
</dbReference>
<dbReference type="InterPro" id="IPR001810">
    <property type="entry name" value="F-box_dom"/>
</dbReference>
<dbReference type="InterPro" id="IPR045048">
    <property type="entry name" value="FBXO31/39"/>
</dbReference>
<dbReference type="InterPro" id="IPR032675">
    <property type="entry name" value="LRR_dom_sf"/>
</dbReference>
<dbReference type="PANTHER" id="PTHR10706">
    <property type="entry name" value="F-BOX FAMILY PROTEIN"/>
    <property type="match status" value="1"/>
</dbReference>
<dbReference type="PANTHER" id="PTHR10706:SF160">
    <property type="entry name" value="F-BOX ONLY PROTEIN 39"/>
    <property type="match status" value="1"/>
</dbReference>
<dbReference type="Pfam" id="PF12937">
    <property type="entry name" value="F-box-like"/>
    <property type="match status" value="1"/>
</dbReference>
<dbReference type="SUPFAM" id="SSF81383">
    <property type="entry name" value="F-box domain"/>
    <property type="match status" value="1"/>
</dbReference>
<dbReference type="SUPFAM" id="SSF52047">
    <property type="entry name" value="RNI-like"/>
    <property type="match status" value="1"/>
</dbReference>
<dbReference type="PROSITE" id="PS50181">
    <property type="entry name" value="FBOX"/>
    <property type="match status" value="1"/>
</dbReference>